<dbReference type="EMBL" id="AF119838">
    <property type="protein sequence ID" value="AAF13764.1"/>
    <property type="molecule type" value="Genomic_DNA"/>
</dbReference>
<dbReference type="PIR" id="S35046">
    <property type="entry name" value="S35046"/>
</dbReference>
<dbReference type="RefSeq" id="WP_018987197.1">
    <property type="nucleotide sequence ID" value="NZ_CP033953.1"/>
</dbReference>
<dbReference type="PDB" id="1E8E">
    <property type="method" value="NMR"/>
    <property type="chains" value="A=21-144"/>
</dbReference>
<dbReference type="PDB" id="1GU2">
    <property type="method" value="X-ray"/>
    <property type="resolution" value="1.19 A"/>
    <property type="chains" value="A/B=21-144"/>
</dbReference>
<dbReference type="PDB" id="1OAE">
    <property type="method" value="X-ray"/>
    <property type="resolution" value="1.95 A"/>
    <property type="chains" value="A/B=21-144"/>
</dbReference>
<dbReference type="PDBsum" id="1E8E"/>
<dbReference type="PDBsum" id="1GU2"/>
<dbReference type="PDBsum" id="1OAE"/>
<dbReference type="BMRB" id="Q9RQB9"/>
<dbReference type="SMR" id="Q9RQB9"/>
<dbReference type="STRING" id="1122236.GCA_000378225_02216"/>
<dbReference type="DrugBank" id="DB03317">
    <property type="generic name" value="Ferroheme C"/>
</dbReference>
<dbReference type="OrthoDB" id="5295318at2"/>
<dbReference type="EvolutionaryTrace" id="Q9RQB9"/>
<dbReference type="GO" id="GO:0009055">
    <property type="term" value="F:electron transfer activity"/>
    <property type="evidence" value="ECO:0007669"/>
    <property type="project" value="InterPro"/>
</dbReference>
<dbReference type="GO" id="GO:0020037">
    <property type="term" value="F:heme binding"/>
    <property type="evidence" value="ECO:0007669"/>
    <property type="project" value="InterPro"/>
</dbReference>
<dbReference type="GO" id="GO:0046872">
    <property type="term" value="F:metal ion binding"/>
    <property type="evidence" value="ECO:0007669"/>
    <property type="project" value="UniProtKB-KW"/>
</dbReference>
<dbReference type="Gene3D" id="1.10.760.10">
    <property type="entry name" value="Cytochrome c-like domain"/>
    <property type="match status" value="1"/>
</dbReference>
<dbReference type="InterPro" id="IPR009056">
    <property type="entry name" value="Cyt_c-like_dom"/>
</dbReference>
<dbReference type="InterPro" id="IPR036909">
    <property type="entry name" value="Cyt_c-like_dom_sf"/>
</dbReference>
<dbReference type="InterPro" id="IPR015170">
    <property type="entry name" value="DUF1924_SHP"/>
</dbReference>
<dbReference type="Pfam" id="PF09086">
    <property type="entry name" value="DUF1924"/>
    <property type="match status" value="1"/>
</dbReference>
<dbReference type="SUPFAM" id="SSF46626">
    <property type="entry name" value="Cytochrome c"/>
    <property type="match status" value="1"/>
</dbReference>
<dbReference type="PROSITE" id="PS51007">
    <property type="entry name" value="CYTC"/>
    <property type="match status" value="1"/>
</dbReference>
<protein>
    <recommendedName>
        <fullName>Cytochrome c''</fullName>
    </recommendedName>
</protein>
<gene>
    <name type="primary">cycA</name>
</gene>
<evidence type="ECO:0000269" key="1">
    <source>
    </source>
</evidence>
<evidence type="ECO:0000269" key="2">
    <source>
    </source>
</evidence>
<evidence type="ECO:0000269" key="3">
    <source>
    </source>
</evidence>
<evidence type="ECO:0000269" key="4">
    <source ref="4"/>
</evidence>
<evidence type="ECO:0000305" key="5"/>
<evidence type="ECO:0000312" key="6">
    <source>
        <dbReference type="EMBL" id="AAF13764.1"/>
    </source>
</evidence>
<evidence type="ECO:0007829" key="7">
    <source>
        <dbReference type="PDB" id="1E8E"/>
    </source>
</evidence>
<evidence type="ECO:0007829" key="8">
    <source>
        <dbReference type="PDB" id="1GU2"/>
    </source>
</evidence>
<organism evidence="6">
    <name type="scientific">Methylophilus methylotrophus</name>
    <name type="common">Bacterium W3A1</name>
    <dbReference type="NCBI Taxonomy" id="17"/>
    <lineage>
        <taxon>Bacteria</taxon>
        <taxon>Pseudomonadati</taxon>
        <taxon>Pseudomonadota</taxon>
        <taxon>Betaproteobacteria</taxon>
        <taxon>Nitrosomonadales</taxon>
        <taxon>Methylophilaceae</taxon>
        <taxon>Methylophilus</taxon>
    </lineage>
</organism>
<comment type="subunit">
    <text evidence="4 5">Monomer.</text>
</comment>
<comment type="PTM">
    <text>Binds 1 heme c group covalently per subunit. The heme is low-spin in the oxidized state but switches to a high-spin form upon reduction, due to the dissociation of one of the axial histidines, His-115.</text>
</comment>
<comment type="mass spectrometry"/>
<reference evidence="5" key="1">
    <citation type="journal article" date="1999" name="Biochim. Biophys. Acta">
        <title>Cloning and sequence analysis of the gene encoding Methylophilus methylotrophus cytochrome c'', a unique protein with a perpendicular orientation of the histidinyl ligands.</title>
        <authorList>
            <person name="Price N.J."/>
            <person name="Vijgenboom E."/>
            <person name="Ribeiro G."/>
            <person name="Costa J.V."/>
            <person name="Canters G.W."/>
            <person name="Santos H."/>
        </authorList>
    </citation>
    <scope>NUCLEOTIDE SEQUENCE [GENOMIC DNA]</scope>
    <source>
        <strain>NCIMB 11585 / AS4</strain>
    </source>
</reference>
<reference evidence="5" key="2">
    <citation type="journal article" date="1999" name="Biochim. Biophys. Acta">
        <title>Cytochrome c'' from the obligate methylotroph Methylophilus methylotrophus, an unexpected homolog of sphaeroides heme protein from the phototroph Rhodobacter sphaeroides.</title>
        <authorList>
            <person name="Klarskov K."/>
            <person name="Leys D."/>
            <person name="Backers K."/>
            <person name="Costa H.S."/>
            <person name="Santos H."/>
            <person name="Guisez Y."/>
            <person name="Van Beeumen J.J."/>
        </authorList>
    </citation>
    <scope>PROTEIN SEQUENCE OF 21-144</scope>
    <scope>MASS SPECTROMETRY</scope>
</reference>
<reference evidence="5" key="3">
    <citation type="journal article" date="1993" name="Eur. J. Biochem.">
        <title>Characterization of the haem environment in Methylophilus methylotrophus ferricytochrome c'' by 1H-NMR.</title>
        <authorList>
            <person name="Costa H.S."/>
            <person name="Santos H."/>
            <person name="Turner D.L."/>
        </authorList>
    </citation>
    <scope>PROTEIN SEQUENCE OF 21-82</scope>
</reference>
<reference evidence="5" key="4">
    <citation type="journal article" date="1988" name="Biochim. Biophys. Acta">
        <title>Characterization and NMR studies of a novel cytochrome c isolated from Methylophilus methylotrophus which shows a redox-linked change of spin state.</title>
        <authorList>
            <person name="Santos H."/>
            <person name="Turner D.L."/>
        </authorList>
    </citation>
    <scope>PROTEIN SEQUENCE OF 21-64</scope>
    <scope>SUBUNIT</scope>
</reference>
<reference evidence="5" key="5">
    <citation type="journal article" date="1992" name="Eur. J. Biochem.">
        <title>Involvement of a labile axial histidine in coupling electron and proton transfer in Methylophilus methylotrophus cytochrome c''.</title>
        <authorList>
            <person name="Costa H.S."/>
            <person name="Santos H."/>
            <person name="Turner D.L."/>
            <person name="Xavier A.V."/>
        </authorList>
    </citation>
    <scope>CHARACTERIZATION</scope>
    <source>
        <strain>ATCC 53528 / DSM 5691 / CCUG 58724 / LMG 6787 / NCIMB 10515 / AS1</strain>
    </source>
</reference>
<reference evidence="5" key="6">
    <citation type="journal article" date="1990" name="Biochem. J.">
        <title>Cytochrome c'' isolated from Methylophilus methylotrophus. An example of bis-histidine-co-ordinated Fe3+ haem, with near-perpendicular orientation of the ligands.</title>
        <authorList>
            <person name="Berry M.J."/>
            <person name="George S.J."/>
            <person name="Thomson A.J."/>
            <person name="Santos H."/>
            <person name="Turner D.L."/>
        </authorList>
    </citation>
    <scope>EPR SPECTROSCOPY</scope>
</reference>
<reference evidence="5" key="7">
    <citation type="journal article" date="2003" name="Acta Crystallogr. D">
        <title>Crystallization and preliminary X-ray characterization of cytochrome c'' from the obligate methylotroph Methylophilus methylotrophus.</title>
        <authorList>
            <person name="Enguita F.J."/>
            <person name="Rodrigues L."/>
            <person name="Archer M."/>
            <person name="Sieker L."/>
            <person name="Rodrigues A."/>
            <person name="Pohl E."/>
            <person name="Turner D.L."/>
            <person name="Santos H."/>
            <person name="Carrondo M.A."/>
        </authorList>
    </citation>
    <scope>X-RAY CRYSTALLOGRAPHY (1.19 ANGSTROMS) OF 21-144</scope>
</reference>
<reference evidence="5" key="8">
    <citation type="journal article" date="2001" name="J. Mol. Biol.">
        <title>Solution structure of Methylophilus methylotrophus cytochrome c'': insights into the structural basis of haem-ligand detachment.</title>
        <authorList>
            <person name="Brennan L."/>
            <person name="Turner D.L."/>
            <person name="Fareleira P."/>
            <person name="Santos H."/>
        </authorList>
    </citation>
    <scope>STRUCTURE BY NMR OF 21-144</scope>
</reference>
<feature type="signal peptide" evidence="1 3 4">
    <location>
        <begin position="1"/>
        <end position="20"/>
    </location>
</feature>
<feature type="chain" id="PRO_0000006512" description="Cytochrome c''">
    <location>
        <begin position="21"/>
        <end position="144"/>
    </location>
</feature>
<feature type="binding site" description="covalent">
    <location>
        <position position="69"/>
    </location>
    <ligand>
        <name>heme c</name>
        <dbReference type="ChEBI" id="CHEBI:61717"/>
    </ligand>
</feature>
<feature type="binding site" description="covalent">
    <location>
        <position position="72"/>
    </location>
    <ligand>
        <name>heme c</name>
        <dbReference type="ChEBI" id="CHEBI:61717"/>
    </ligand>
</feature>
<feature type="binding site" description="axial binding residue">
    <location>
        <position position="73"/>
    </location>
    <ligand>
        <name>heme c</name>
        <dbReference type="ChEBI" id="CHEBI:61717"/>
    </ligand>
    <ligandPart>
        <name>Fe</name>
        <dbReference type="ChEBI" id="CHEBI:18248"/>
    </ligandPart>
</feature>
<feature type="binding site" description="axial binding residue">
    <location>
        <position position="115"/>
    </location>
    <ligand>
        <name>heme c</name>
        <dbReference type="ChEBI" id="CHEBI:61717"/>
    </ligand>
    <ligandPart>
        <name>Fe</name>
        <dbReference type="ChEBI" id="CHEBI:18248"/>
    </ligandPart>
</feature>
<feature type="disulfide bond" evidence="2">
    <location>
        <begin position="116"/>
        <end position="124"/>
    </location>
</feature>
<feature type="helix" evidence="8">
    <location>
        <begin position="22"/>
        <end position="39"/>
    </location>
</feature>
<feature type="helix" evidence="8">
    <location>
        <begin position="48"/>
        <end position="56"/>
    </location>
</feature>
<feature type="strand" evidence="7">
    <location>
        <begin position="59"/>
        <end position="61"/>
    </location>
</feature>
<feature type="turn" evidence="7">
    <location>
        <begin position="62"/>
        <end position="64"/>
    </location>
</feature>
<feature type="strand" evidence="7">
    <location>
        <begin position="65"/>
        <end position="67"/>
    </location>
</feature>
<feature type="helix" evidence="8">
    <location>
        <begin position="69"/>
        <end position="73"/>
    </location>
</feature>
<feature type="turn" evidence="8">
    <location>
        <begin position="84"/>
        <end position="86"/>
    </location>
</feature>
<feature type="turn" evidence="8">
    <location>
        <begin position="95"/>
        <end position="97"/>
    </location>
</feature>
<feature type="turn" evidence="8">
    <location>
        <begin position="99"/>
        <end position="103"/>
    </location>
</feature>
<feature type="helix" evidence="8">
    <location>
        <begin position="105"/>
        <end position="120"/>
    </location>
</feature>
<feature type="helix" evidence="8">
    <location>
        <begin position="126"/>
        <end position="138"/>
    </location>
</feature>
<name>CYCA_METME</name>
<proteinExistence type="evidence at protein level"/>
<accession>Q9RQB9</accession>
<accession>Q9R555</accession>
<sequence>MKIKTIIAVFGVLFSAHALADVTNAEKLVYKYTNIAHSANPMYEAPSITDGKIFFNRKFKTPSGKEAACASCHTNNPANVGKNIVTGKEIPPLAPRVNTKRFTDIDKVEDEFTKHCNDILGADCSPSEKANFIAYLLTETKPTK</sequence>
<keyword id="KW-0002">3D-structure</keyword>
<keyword id="KW-0903">Direct protein sequencing</keyword>
<keyword id="KW-1015">Disulfide bond</keyword>
<keyword id="KW-0249">Electron transport</keyword>
<keyword id="KW-0349">Heme</keyword>
<keyword id="KW-0408">Iron</keyword>
<keyword id="KW-0479">Metal-binding</keyword>
<keyword id="KW-0732">Signal</keyword>
<keyword id="KW-0813">Transport</keyword>